<proteinExistence type="evidence at protein level"/>
<evidence type="ECO:0000250" key="1">
    <source>
        <dbReference type="UniProtKB" id="Q5ZPR3"/>
    </source>
</evidence>
<evidence type="ECO:0000250" key="2">
    <source>
        <dbReference type="UniProtKB" id="Q7TSP5"/>
    </source>
</evidence>
<evidence type="ECO:0000255" key="3"/>
<evidence type="ECO:0000255" key="4">
    <source>
        <dbReference type="PROSITE-ProRule" id="PRU00114"/>
    </source>
</evidence>
<evidence type="ECO:0000269" key="5">
    <source>
    </source>
</evidence>
<evidence type="ECO:0000269" key="6">
    <source>
    </source>
</evidence>
<evidence type="ECO:0000269" key="7">
    <source>
    </source>
</evidence>
<evidence type="ECO:0000269" key="8">
    <source>
    </source>
</evidence>
<evidence type="ECO:0000269" key="9">
    <source>
    </source>
</evidence>
<evidence type="ECO:0000269" key="10">
    <source>
    </source>
</evidence>
<evidence type="ECO:0000269" key="11">
    <source>
    </source>
</evidence>
<evidence type="ECO:0000269" key="12">
    <source>
    </source>
</evidence>
<evidence type="ECO:0000269" key="13">
    <source>
    </source>
</evidence>
<evidence type="ECO:0000269" key="14">
    <source>
    </source>
</evidence>
<evidence type="ECO:0000269" key="15">
    <source>
    </source>
</evidence>
<evidence type="ECO:0000269" key="16">
    <source>
    </source>
</evidence>
<evidence type="ECO:0000269" key="17">
    <source>
    </source>
</evidence>
<evidence type="ECO:0000269" key="18">
    <source>
    </source>
</evidence>
<evidence type="ECO:0000269" key="19">
    <source ref="4"/>
</evidence>
<evidence type="ECO:0000303" key="20">
    <source>
    </source>
</evidence>
<evidence type="ECO:0000303" key="21">
    <source>
    </source>
</evidence>
<evidence type="ECO:0000303" key="22">
    <source>
    </source>
</evidence>
<evidence type="ECO:0000303" key="23">
    <source ref="4"/>
</evidence>
<evidence type="ECO:0000305" key="24"/>
<evidence type="ECO:0000312" key="25">
    <source>
        <dbReference type="EMBL" id="AAH74729.1"/>
    </source>
</evidence>
<evidence type="ECO:0000312" key="26">
    <source>
        <dbReference type="EMBL" id="AAP37283.1"/>
    </source>
</evidence>
<evidence type="ECO:0000312" key="27">
    <source>
        <dbReference type="EMBL" id="AAQ24206.1"/>
    </source>
</evidence>
<evidence type="ECO:0000312" key="28">
    <source>
        <dbReference type="EMBL" id="AAQ88718.1"/>
    </source>
</evidence>
<evidence type="ECO:0000312" key="29">
    <source>
        <dbReference type="EMBL" id="AAS13400.1"/>
    </source>
</evidence>
<evidence type="ECO:0000312" key="30">
    <source>
        <dbReference type="EMBL" id="AAZ17406.1"/>
    </source>
</evidence>
<evidence type="ECO:0000312" key="31">
    <source>
        <dbReference type="EMBL" id="AL391476"/>
    </source>
</evidence>
<evidence type="ECO:0000312" key="32">
    <source>
        <dbReference type="EMBL" id="BAB15349.1"/>
    </source>
</evidence>
<evidence type="ECO:0000312" key="33">
    <source>
        <dbReference type="EMBL" id="EAW56672.1"/>
    </source>
</evidence>
<evidence type="ECO:0007829" key="34">
    <source>
        <dbReference type="PDB" id="4GOS"/>
    </source>
</evidence>
<dbReference type="EMBL" id="AY280972">
    <property type="protein sequence ID" value="AAP37283.1"/>
    <property type="molecule type" value="mRNA"/>
</dbReference>
<dbReference type="EMBL" id="AY346100">
    <property type="protein sequence ID" value="AAQ24206.1"/>
    <property type="molecule type" value="mRNA"/>
</dbReference>
<dbReference type="EMBL" id="DQ103757">
    <property type="protein sequence ID" value="AAZ17406.1"/>
    <property type="molecule type" value="mRNA"/>
</dbReference>
<dbReference type="EMBL" id="AY442303">
    <property type="protein sequence ID" value="AAS13400.1"/>
    <property type="molecule type" value="mRNA"/>
</dbReference>
<dbReference type="EMBL" id="AY358352">
    <property type="protein sequence ID" value="AAQ88718.1"/>
    <property type="molecule type" value="mRNA"/>
</dbReference>
<dbReference type="EMBL" id="AK026071">
    <property type="protein sequence ID" value="BAB15349.1"/>
    <property type="molecule type" value="mRNA"/>
</dbReference>
<dbReference type="EMBL" id="AK303466">
    <property type="protein sequence ID" value="BAH13967.1"/>
    <property type="molecule type" value="mRNA"/>
</dbReference>
<dbReference type="EMBL" id="AL391476">
    <property type="status" value="NOT_ANNOTATED_CDS"/>
    <property type="molecule type" value="Genomic_DNA"/>
</dbReference>
<dbReference type="EMBL" id="CH471122">
    <property type="protein sequence ID" value="EAW56672.1"/>
    <property type="molecule type" value="Genomic_DNA"/>
</dbReference>
<dbReference type="EMBL" id="CH471122">
    <property type="protein sequence ID" value="EAW56673.1"/>
    <property type="molecule type" value="Genomic_DNA"/>
</dbReference>
<dbReference type="EMBL" id="BC065717">
    <property type="protein sequence ID" value="AAH65717.1"/>
    <property type="molecule type" value="mRNA"/>
</dbReference>
<dbReference type="EMBL" id="BC074729">
    <property type="protein sequence ID" value="AAH74729.1"/>
    <property type="molecule type" value="mRNA"/>
</dbReference>
<dbReference type="EMBL" id="DQ836392">
    <property type="protein sequence ID" value="ABI16083.1"/>
    <property type="molecule type" value="mRNA"/>
</dbReference>
<dbReference type="CCDS" id="CCDS58019.1">
    <molecule id="Q7Z7D3-4"/>
</dbReference>
<dbReference type="CCDS" id="CCDS58020.1">
    <molecule id="Q7Z7D3-2"/>
</dbReference>
<dbReference type="CCDS" id="CCDS894.1">
    <molecule id="Q7Z7D3-1"/>
</dbReference>
<dbReference type="RefSeq" id="NP_001240778.1">
    <molecule id="Q7Z7D3-4"/>
    <property type="nucleotide sequence ID" value="NM_001253849.2"/>
</dbReference>
<dbReference type="RefSeq" id="NP_001240779.1">
    <molecule id="Q7Z7D3-2"/>
    <property type="nucleotide sequence ID" value="NM_001253850.2"/>
</dbReference>
<dbReference type="RefSeq" id="NP_078902.2">
    <molecule id="Q7Z7D3-1"/>
    <property type="nucleotide sequence ID" value="NM_024626.4"/>
</dbReference>
<dbReference type="PDB" id="4GOS">
    <property type="method" value="X-ray"/>
    <property type="resolution" value="1.59 A"/>
    <property type="chains" value="A=30-148"/>
</dbReference>
<dbReference type="PDBsum" id="4GOS"/>
<dbReference type="SMR" id="Q7Z7D3"/>
<dbReference type="BioGRID" id="122803">
    <property type="interactions" value="18"/>
</dbReference>
<dbReference type="FunCoup" id="Q7Z7D3">
    <property type="interactions" value="486"/>
</dbReference>
<dbReference type="IntAct" id="Q7Z7D3">
    <property type="interactions" value="2"/>
</dbReference>
<dbReference type="STRING" id="9606.ENSP00000358470"/>
<dbReference type="GlyConnect" id="1897">
    <property type="glycosylation" value="5 N-Linked glycans (1 site)"/>
</dbReference>
<dbReference type="GlyCosmos" id="Q7Z7D3">
    <property type="glycosylation" value="2 sites, 5 glycans"/>
</dbReference>
<dbReference type="GlyGen" id="Q7Z7D3">
    <property type="glycosylation" value="2 sites, 7 N-linked glycans (1 site)"/>
</dbReference>
<dbReference type="iPTMnet" id="Q7Z7D3"/>
<dbReference type="PhosphoSitePlus" id="Q7Z7D3"/>
<dbReference type="BioMuta" id="VTCN1"/>
<dbReference type="DMDM" id="74759262"/>
<dbReference type="CPTAC" id="CPTAC-5982"/>
<dbReference type="jPOST" id="Q7Z7D3"/>
<dbReference type="MassIVE" id="Q7Z7D3"/>
<dbReference type="PaxDb" id="9606-ENSP00000358470"/>
<dbReference type="PeptideAtlas" id="Q7Z7D3"/>
<dbReference type="ProteomicsDB" id="66811"/>
<dbReference type="ProteomicsDB" id="69518">
    <molecule id="Q7Z7D3-1"/>
</dbReference>
<dbReference type="ProteomicsDB" id="69519">
    <molecule id="Q7Z7D3-2"/>
</dbReference>
<dbReference type="ABCD" id="Q7Z7D3">
    <property type="antibodies" value="36 sequenced antibodies"/>
</dbReference>
<dbReference type="Antibodypedia" id="33888">
    <property type="antibodies" value="891 antibodies from 45 providers"/>
</dbReference>
<dbReference type="CPTC" id="Q7Z7D3">
    <property type="antibodies" value="2 antibodies"/>
</dbReference>
<dbReference type="DNASU" id="79679"/>
<dbReference type="Ensembl" id="ENST00000328189.7">
    <molecule id="Q7Z7D3-2"/>
    <property type="protein sequence ID" value="ENSP00000328168.3"/>
    <property type="gene ID" value="ENSG00000134258.18"/>
</dbReference>
<dbReference type="Ensembl" id="ENST00000369458.8">
    <molecule id="Q7Z7D3-1"/>
    <property type="protein sequence ID" value="ENSP00000358470.3"/>
    <property type="gene ID" value="ENSG00000134258.18"/>
</dbReference>
<dbReference type="Ensembl" id="ENST00000539893.5">
    <molecule id="Q7Z7D3-4"/>
    <property type="protein sequence ID" value="ENSP00000444724.1"/>
    <property type="gene ID" value="ENSG00000134258.18"/>
</dbReference>
<dbReference type="GeneID" id="79679"/>
<dbReference type="KEGG" id="hsa:79679"/>
<dbReference type="MANE-Select" id="ENST00000369458.8">
    <property type="protein sequence ID" value="ENSP00000358470.3"/>
    <property type="RefSeq nucleotide sequence ID" value="NM_024626.4"/>
    <property type="RefSeq protein sequence ID" value="NP_078902.2"/>
</dbReference>
<dbReference type="UCSC" id="uc001ehb.4">
    <molecule id="Q7Z7D3-1"/>
    <property type="organism name" value="human"/>
</dbReference>
<dbReference type="AGR" id="HGNC:28873"/>
<dbReference type="CTD" id="79679"/>
<dbReference type="DisGeNET" id="79679"/>
<dbReference type="GeneCards" id="VTCN1"/>
<dbReference type="HGNC" id="HGNC:28873">
    <property type="gene designation" value="VTCN1"/>
</dbReference>
<dbReference type="HPA" id="ENSG00000134258">
    <property type="expression patterns" value="Tissue enhanced (breast, fallopian tube, pancreas)"/>
</dbReference>
<dbReference type="MIM" id="608162">
    <property type="type" value="gene"/>
</dbReference>
<dbReference type="neXtProt" id="NX_Q7Z7D3"/>
<dbReference type="OpenTargets" id="ENSG00000134258"/>
<dbReference type="PharmGKB" id="PA142670611"/>
<dbReference type="VEuPathDB" id="HostDB:ENSG00000134258"/>
<dbReference type="eggNOG" id="ENOG502S286">
    <property type="taxonomic scope" value="Eukaryota"/>
</dbReference>
<dbReference type="GeneTree" id="ENSGT00940000157300"/>
<dbReference type="HOGENOM" id="CLU_013137_8_6_1"/>
<dbReference type="InParanoid" id="Q7Z7D3"/>
<dbReference type="OMA" id="CYIVTSK"/>
<dbReference type="OrthoDB" id="9898017at2759"/>
<dbReference type="PAN-GO" id="Q7Z7D3">
    <property type="GO annotations" value="4 GO annotations based on evolutionary models"/>
</dbReference>
<dbReference type="PhylomeDB" id="Q7Z7D3"/>
<dbReference type="TreeFam" id="TF331083"/>
<dbReference type="PathwayCommons" id="Q7Z7D3"/>
<dbReference type="SignaLink" id="Q7Z7D3"/>
<dbReference type="BioGRID-ORCS" id="79679">
    <property type="hits" value="10 hits in 1141 CRISPR screens"/>
</dbReference>
<dbReference type="ChiTaRS" id="VTCN1">
    <property type="organism name" value="human"/>
</dbReference>
<dbReference type="EvolutionaryTrace" id="Q7Z7D3"/>
<dbReference type="GeneWiki" id="VTCN1"/>
<dbReference type="GenomeRNAi" id="79679"/>
<dbReference type="Pharos" id="Q7Z7D3">
    <property type="development level" value="Tbio"/>
</dbReference>
<dbReference type="PRO" id="PR:Q7Z7D3"/>
<dbReference type="Proteomes" id="UP000005640">
    <property type="component" value="Chromosome 1"/>
</dbReference>
<dbReference type="RNAct" id="Q7Z7D3">
    <property type="molecule type" value="protein"/>
</dbReference>
<dbReference type="Bgee" id="ENSG00000134258">
    <property type="expression patterns" value="Expressed in palpebral conjunctiva and 91 other cell types or tissues"/>
</dbReference>
<dbReference type="ExpressionAtlas" id="Q7Z7D3">
    <property type="expression patterns" value="baseline and differential"/>
</dbReference>
<dbReference type="GO" id="GO:0009897">
    <property type="term" value="C:external side of plasma membrane"/>
    <property type="evidence" value="ECO:0000314"/>
    <property type="project" value="UniProtKB"/>
</dbReference>
<dbReference type="GO" id="GO:0005102">
    <property type="term" value="F:signaling receptor binding"/>
    <property type="evidence" value="ECO:0000318"/>
    <property type="project" value="GO_Central"/>
</dbReference>
<dbReference type="GO" id="GO:0002250">
    <property type="term" value="P:adaptive immune response"/>
    <property type="evidence" value="ECO:0007669"/>
    <property type="project" value="UniProtKB-KW"/>
</dbReference>
<dbReference type="GO" id="GO:0043066">
    <property type="term" value="P:negative regulation of apoptotic process"/>
    <property type="evidence" value="ECO:0000315"/>
    <property type="project" value="UniProtKB"/>
</dbReference>
<dbReference type="GO" id="GO:0050868">
    <property type="term" value="P:negative regulation of T cell activation"/>
    <property type="evidence" value="ECO:0000315"/>
    <property type="project" value="UniProtKB"/>
</dbReference>
<dbReference type="GO" id="GO:0042130">
    <property type="term" value="P:negative regulation of T cell proliferation"/>
    <property type="evidence" value="ECO:0000315"/>
    <property type="project" value="UniProtKB"/>
</dbReference>
<dbReference type="GO" id="GO:0032743">
    <property type="term" value="P:positive regulation of interleukin-2 production"/>
    <property type="evidence" value="ECO:0007669"/>
    <property type="project" value="Ensembl"/>
</dbReference>
<dbReference type="GO" id="GO:0042102">
    <property type="term" value="P:positive regulation of T cell proliferation"/>
    <property type="evidence" value="ECO:0007669"/>
    <property type="project" value="Ensembl"/>
</dbReference>
<dbReference type="GO" id="GO:0001817">
    <property type="term" value="P:regulation of cytokine production"/>
    <property type="evidence" value="ECO:0000318"/>
    <property type="project" value="GO_Central"/>
</dbReference>
<dbReference type="GO" id="GO:0001562">
    <property type="term" value="P:response to protozoan"/>
    <property type="evidence" value="ECO:0007669"/>
    <property type="project" value="Ensembl"/>
</dbReference>
<dbReference type="GO" id="GO:0050852">
    <property type="term" value="P:T cell receptor signaling pathway"/>
    <property type="evidence" value="ECO:0000318"/>
    <property type="project" value="GO_Central"/>
</dbReference>
<dbReference type="CDD" id="cd20984">
    <property type="entry name" value="IgV_B7-H4"/>
    <property type="match status" value="1"/>
</dbReference>
<dbReference type="FunFam" id="2.60.40.10:FF:000590">
    <property type="entry name" value="V-set domain-containing T cell activation inhibitor 1"/>
    <property type="match status" value="1"/>
</dbReference>
<dbReference type="FunFam" id="2.60.40.10:FF:000142">
    <property type="entry name" value="V-set domain-containing T-cell activation inhibitor 1"/>
    <property type="match status" value="1"/>
</dbReference>
<dbReference type="Gene3D" id="2.60.40.10">
    <property type="entry name" value="Immunoglobulins"/>
    <property type="match status" value="2"/>
</dbReference>
<dbReference type="InterPro" id="IPR053896">
    <property type="entry name" value="BTN3A2-like_Ig-C"/>
</dbReference>
<dbReference type="InterPro" id="IPR007110">
    <property type="entry name" value="Ig-like_dom"/>
</dbReference>
<dbReference type="InterPro" id="IPR036179">
    <property type="entry name" value="Ig-like_dom_sf"/>
</dbReference>
<dbReference type="InterPro" id="IPR013783">
    <property type="entry name" value="Ig-like_fold"/>
</dbReference>
<dbReference type="InterPro" id="IPR003599">
    <property type="entry name" value="Ig_sub"/>
</dbReference>
<dbReference type="InterPro" id="IPR013106">
    <property type="entry name" value="Ig_V-set"/>
</dbReference>
<dbReference type="InterPro" id="IPR050504">
    <property type="entry name" value="IgSF_BTN/MOG"/>
</dbReference>
<dbReference type="PANTHER" id="PTHR24100">
    <property type="entry name" value="BUTYROPHILIN"/>
    <property type="match status" value="1"/>
</dbReference>
<dbReference type="PANTHER" id="PTHR24100:SF0">
    <property type="entry name" value="V-SET DOMAIN-CONTAINING T-CELL ACTIVATION INHIBITOR 1"/>
    <property type="match status" value="1"/>
</dbReference>
<dbReference type="Pfam" id="PF22705">
    <property type="entry name" value="C2-set_3"/>
    <property type="match status" value="1"/>
</dbReference>
<dbReference type="Pfam" id="PF07686">
    <property type="entry name" value="V-set"/>
    <property type="match status" value="1"/>
</dbReference>
<dbReference type="SMART" id="SM00409">
    <property type="entry name" value="IG"/>
    <property type="match status" value="1"/>
</dbReference>
<dbReference type="SUPFAM" id="SSF48726">
    <property type="entry name" value="Immunoglobulin"/>
    <property type="match status" value="2"/>
</dbReference>
<dbReference type="PROSITE" id="PS50835">
    <property type="entry name" value="IG_LIKE"/>
    <property type="match status" value="2"/>
</dbReference>
<reference evidence="24 26" key="1">
    <citation type="journal article" date="2003" name="Immunity">
        <title>B7-H4, a molecule of the B7 family, negatively regulates T cell immunity.</title>
        <authorList>
            <person name="Sica G.L."/>
            <person name="Choi I.-H."/>
            <person name="Zhu G."/>
            <person name="Tamada K."/>
            <person name="Wang S.-D."/>
            <person name="Tamura H."/>
            <person name="Chapoval A.I."/>
            <person name="Flies D.B."/>
            <person name="Bajorath J."/>
            <person name="Chen L."/>
        </authorList>
    </citation>
    <scope>NUCLEOTIDE SEQUENCE [MRNA] (ISOFORM 1)</scope>
    <scope>SUBCELLULAR LOCATION</scope>
    <scope>TISSUE SPECIFICITY</scope>
    <source>
        <tissue evidence="17">Placenta</tissue>
    </source>
</reference>
<reference evidence="24 27" key="2">
    <citation type="journal article" date="2003" name="Proc. Natl. Acad. Sci. U.S.A.">
        <title>B7x: a widely expressed B7 family member that inhibits T cell activation.</title>
        <authorList>
            <person name="Zang X."/>
            <person name="Loke P."/>
            <person name="Kim J."/>
            <person name="Murphy K."/>
            <person name="Waitz R."/>
            <person name="Allison J.P."/>
        </authorList>
    </citation>
    <scope>NUCLEOTIDE SEQUENCE [MRNA] (ISOFORM 1)</scope>
</reference>
<reference evidence="24 30" key="3">
    <citation type="journal article" date="2006" name="Lung Cancer">
        <title>B7-H3 and B7-H4 expression in non-small-cell lung cancer.</title>
        <authorList>
            <person name="Sun Y."/>
            <person name="Wang Y."/>
            <person name="Zhao J."/>
            <person name="Gu M."/>
            <person name="Giscombe R."/>
            <person name="Lefvert A.K."/>
            <person name="Wang X."/>
        </authorList>
    </citation>
    <scope>NUCLEOTIDE SEQUENCE [MRNA] (ISOFORM 2)</scope>
    <scope>SUBCELLULAR LOCATION</scope>
    <scope>TISSUE SPECIFICITY</scope>
</reference>
<reference evidence="24 29" key="4">
    <citation type="submission" date="2003-10" db="EMBL/GenBank/DDBJ databases">
        <title>A new splice variant of B7-H4.</title>
        <authorList>
            <person name="Mao Y."/>
            <person name="Zhang X."/>
        </authorList>
    </citation>
    <scope>NUCLEOTIDE SEQUENCE [MRNA] (ISOFORM 3)</scope>
</reference>
<reference evidence="24 28" key="5">
    <citation type="journal article" date="2003" name="Genome Res.">
        <title>The secreted protein discovery initiative (SPDI), a large-scale effort to identify novel human secreted and transmembrane proteins: a bioinformatics assessment.</title>
        <authorList>
            <person name="Clark H.F."/>
            <person name="Gurney A.L."/>
            <person name="Abaya E."/>
            <person name="Baker K."/>
            <person name="Baldwin D.T."/>
            <person name="Brush J."/>
            <person name="Chen J."/>
            <person name="Chow B."/>
            <person name="Chui C."/>
            <person name="Crowley C."/>
            <person name="Currell B."/>
            <person name="Deuel B."/>
            <person name="Dowd P."/>
            <person name="Eaton D."/>
            <person name="Foster J.S."/>
            <person name="Grimaldi C."/>
            <person name="Gu Q."/>
            <person name="Hass P.E."/>
            <person name="Heldens S."/>
            <person name="Huang A."/>
            <person name="Kim H.S."/>
            <person name="Klimowski L."/>
            <person name="Jin Y."/>
            <person name="Johnson S."/>
            <person name="Lee J."/>
            <person name="Lewis L."/>
            <person name="Liao D."/>
            <person name="Mark M.R."/>
            <person name="Robbie E."/>
            <person name="Sanchez C."/>
            <person name="Schoenfeld J."/>
            <person name="Seshagiri S."/>
            <person name="Simmons L."/>
            <person name="Singh J."/>
            <person name="Smith V."/>
            <person name="Stinson J."/>
            <person name="Vagts A."/>
            <person name="Vandlen R.L."/>
            <person name="Watanabe C."/>
            <person name="Wieand D."/>
            <person name="Woods K."/>
            <person name="Xie M.-H."/>
            <person name="Yansura D.G."/>
            <person name="Yi S."/>
            <person name="Yu G."/>
            <person name="Yuan J."/>
            <person name="Zhang M."/>
            <person name="Zhang Z."/>
            <person name="Goddard A.D."/>
            <person name="Wood W.I."/>
            <person name="Godowski P.J."/>
            <person name="Gray A.M."/>
        </authorList>
    </citation>
    <scope>NUCLEOTIDE SEQUENCE [LARGE SCALE MRNA] (ISOFORM 1)</scope>
</reference>
<reference evidence="24 32" key="6">
    <citation type="journal article" date="2004" name="Nat. Genet.">
        <title>Complete sequencing and characterization of 21,243 full-length human cDNAs.</title>
        <authorList>
            <person name="Ota T."/>
            <person name="Suzuki Y."/>
            <person name="Nishikawa T."/>
            <person name="Otsuki T."/>
            <person name="Sugiyama T."/>
            <person name="Irie R."/>
            <person name="Wakamatsu A."/>
            <person name="Hayashi K."/>
            <person name="Sato H."/>
            <person name="Nagai K."/>
            <person name="Kimura K."/>
            <person name="Makita H."/>
            <person name="Sekine M."/>
            <person name="Obayashi M."/>
            <person name="Nishi T."/>
            <person name="Shibahara T."/>
            <person name="Tanaka T."/>
            <person name="Ishii S."/>
            <person name="Yamamoto J."/>
            <person name="Saito K."/>
            <person name="Kawai Y."/>
            <person name="Isono Y."/>
            <person name="Nakamura Y."/>
            <person name="Nagahari K."/>
            <person name="Murakami K."/>
            <person name="Yasuda T."/>
            <person name="Iwayanagi T."/>
            <person name="Wagatsuma M."/>
            <person name="Shiratori A."/>
            <person name="Sudo H."/>
            <person name="Hosoiri T."/>
            <person name="Kaku Y."/>
            <person name="Kodaira H."/>
            <person name="Kondo H."/>
            <person name="Sugawara M."/>
            <person name="Takahashi M."/>
            <person name="Kanda K."/>
            <person name="Yokoi T."/>
            <person name="Furuya T."/>
            <person name="Kikkawa E."/>
            <person name="Omura Y."/>
            <person name="Abe K."/>
            <person name="Kamihara K."/>
            <person name="Katsuta N."/>
            <person name="Sato K."/>
            <person name="Tanikawa M."/>
            <person name="Yamazaki M."/>
            <person name="Ninomiya K."/>
            <person name="Ishibashi T."/>
            <person name="Yamashita H."/>
            <person name="Murakawa K."/>
            <person name="Fujimori K."/>
            <person name="Tanai H."/>
            <person name="Kimata M."/>
            <person name="Watanabe M."/>
            <person name="Hiraoka S."/>
            <person name="Chiba Y."/>
            <person name="Ishida S."/>
            <person name="Ono Y."/>
            <person name="Takiguchi S."/>
            <person name="Watanabe S."/>
            <person name="Yosida M."/>
            <person name="Hotuta T."/>
            <person name="Kusano J."/>
            <person name="Kanehori K."/>
            <person name="Takahashi-Fujii A."/>
            <person name="Hara H."/>
            <person name="Tanase T.-O."/>
            <person name="Nomura Y."/>
            <person name="Togiya S."/>
            <person name="Komai F."/>
            <person name="Hara R."/>
            <person name="Takeuchi K."/>
            <person name="Arita M."/>
            <person name="Imose N."/>
            <person name="Musashino K."/>
            <person name="Yuuki H."/>
            <person name="Oshima A."/>
            <person name="Sasaki N."/>
            <person name="Aotsuka S."/>
            <person name="Yoshikawa Y."/>
            <person name="Matsunawa H."/>
            <person name="Ichihara T."/>
            <person name="Shiohata N."/>
            <person name="Sano S."/>
            <person name="Moriya S."/>
            <person name="Momiyama H."/>
            <person name="Satoh N."/>
            <person name="Takami S."/>
            <person name="Terashima Y."/>
            <person name="Suzuki O."/>
            <person name="Nakagawa S."/>
            <person name="Senoh A."/>
            <person name="Mizoguchi H."/>
            <person name="Goto Y."/>
            <person name="Shimizu F."/>
            <person name="Wakebe H."/>
            <person name="Hishigaki H."/>
            <person name="Watanabe T."/>
            <person name="Sugiyama A."/>
            <person name="Takemoto M."/>
            <person name="Kawakami B."/>
            <person name="Yamazaki M."/>
            <person name="Watanabe K."/>
            <person name="Kumagai A."/>
            <person name="Itakura S."/>
            <person name="Fukuzumi Y."/>
            <person name="Fujimori Y."/>
            <person name="Komiyama M."/>
            <person name="Tashiro H."/>
            <person name="Tanigami A."/>
            <person name="Fujiwara T."/>
            <person name="Ono T."/>
            <person name="Yamada K."/>
            <person name="Fujii Y."/>
            <person name="Ozaki K."/>
            <person name="Hirao M."/>
            <person name="Ohmori Y."/>
            <person name="Kawabata A."/>
            <person name="Hikiji T."/>
            <person name="Kobatake N."/>
            <person name="Inagaki H."/>
            <person name="Ikema Y."/>
            <person name="Okamoto S."/>
            <person name="Okitani R."/>
            <person name="Kawakami T."/>
            <person name="Noguchi S."/>
            <person name="Itoh T."/>
            <person name="Shigeta K."/>
            <person name="Senba T."/>
            <person name="Matsumura K."/>
            <person name="Nakajima Y."/>
            <person name="Mizuno T."/>
            <person name="Morinaga M."/>
            <person name="Sasaki M."/>
            <person name="Togashi T."/>
            <person name="Oyama M."/>
            <person name="Hata H."/>
            <person name="Watanabe M."/>
            <person name="Komatsu T."/>
            <person name="Mizushima-Sugano J."/>
            <person name="Satoh T."/>
            <person name="Shirai Y."/>
            <person name="Takahashi Y."/>
            <person name="Nakagawa K."/>
            <person name="Okumura K."/>
            <person name="Nagase T."/>
            <person name="Nomura N."/>
            <person name="Kikuchi H."/>
            <person name="Masuho Y."/>
            <person name="Yamashita R."/>
            <person name="Nakai K."/>
            <person name="Yada T."/>
            <person name="Nakamura Y."/>
            <person name="Ohara O."/>
            <person name="Isogai T."/>
            <person name="Sugano S."/>
        </authorList>
    </citation>
    <scope>NUCLEOTIDE SEQUENCE [LARGE SCALE MRNA] (ISOFORMS 1 AND 4)</scope>
    <source>
        <tissue evidence="9">Kidney epithelium</tissue>
        <tissue>Thymus</tissue>
    </source>
</reference>
<reference evidence="31" key="7">
    <citation type="journal article" date="2006" name="Nature">
        <title>The DNA sequence and biological annotation of human chromosome 1.</title>
        <authorList>
            <person name="Gregory S.G."/>
            <person name="Barlow K.F."/>
            <person name="McLay K.E."/>
            <person name="Kaul R."/>
            <person name="Swarbreck D."/>
            <person name="Dunham A."/>
            <person name="Scott C.E."/>
            <person name="Howe K.L."/>
            <person name="Woodfine K."/>
            <person name="Spencer C.C.A."/>
            <person name="Jones M.C."/>
            <person name="Gillson C."/>
            <person name="Searle S."/>
            <person name="Zhou Y."/>
            <person name="Kokocinski F."/>
            <person name="McDonald L."/>
            <person name="Evans R."/>
            <person name="Phillips K."/>
            <person name="Atkinson A."/>
            <person name="Cooper R."/>
            <person name="Jones C."/>
            <person name="Hall R.E."/>
            <person name="Andrews T.D."/>
            <person name="Lloyd C."/>
            <person name="Ainscough R."/>
            <person name="Almeida J.P."/>
            <person name="Ambrose K.D."/>
            <person name="Anderson F."/>
            <person name="Andrew R.W."/>
            <person name="Ashwell R.I.S."/>
            <person name="Aubin K."/>
            <person name="Babbage A.K."/>
            <person name="Bagguley C.L."/>
            <person name="Bailey J."/>
            <person name="Beasley H."/>
            <person name="Bethel G."/>
            <person name="Bird C.P."/>
            <person name="Bray-Allen S."/>
            <person name="Brown J.Y."/>
            <person name="Brown A.J."/>
            <person name="Buckley D."/>
            <person name="Burton J."/>
            <person name="Bye J."/>
            <person name="Carder C."/>
            <person name="Chapman J.C."/>
            <person name="Clark S.Y."/>
            <person name="Clarke G."/>
            <person name="Clee C."/>
            <person name="Cobley V."/>
            <person name="Collier R.E."/>
            <person name="Corby N."/>
            <person name="Coville G.J."/>
            <person name="Davies J."/>
            <person name="Deadman R."/>
            <person name="Dunn M."/>
            <person name="Earthrowl M."/>
            <person name="Ellington A.G."/>
            <person name="Errington H."/>
            <person name="Frankish A."/>
            <person name="Frankland J."/>
            <person name="French L."/>
            <person name="Garner P."/>
            <person name="Garnett J."/>
            <person name="Gay L."/>
            <person name="Ghori M.R.J."/>
            <person name="Gibson R."/>
            <person name="Gilby L.M."/>
            <person name="Gillett W."/>
            <person name="Glithero R.J."/>
            <person name="Grafham D.V."/>
            <person name="Griffiths C."/>
            <person name="Griffiths-Jones S."/>
            <person name="Grocock R."/>
            <person name="Hammond S."/>
            <person name="Harrison E.S.I."/>
            <person name="Hart E."/>
            <person name="Haugen E."/>
            <person name="Heath P.D."/>
            <person name="Holmes S."/>
            <person name="Holt K."/>
            <person name="Howden P.J."/>
            <person name="Hunt A.R."/>
            <person name="Hunt S.E."/>
            <person name="Hunter G."/>
            <person name="Isherwood J."/>
            <person name="James R."/>
            <person name="Johnson C."/>
            <person name="Johnson D."/>
            <person name="Joy A."/>
            <person name="Kay M."/>
            <person name="Kershaw J.K."/>
            <person name="Kibukawa M."/>
            <person name="Kimberley A.M."/>
            <person name="King A."/>
            <person name="Knights A.J."/>
            <person name="Lad H."/>
            <person name="Laird G."/>
            <person name="Lawlor S."/>
            <person name="Leongamornlert D.A."/>
            <person name="Lloyd D.M."/>
            <person name="Loveland J."/>
            <person name="Lovell J."/>
            <person name="Lush M.J."/>
            <person name="Lyne R."/>
            <person name="Martin S."/>
            <person name="Mashreghi-Mohammadi M."/>
            <person name="Matthews L."/>
            <person name="Matthews N.S.W."/>
            <person name="McLaren S."/>
            <person name="Milne S."/>
            <person name="Mistry S."/>
            <person name="Moore M.J.F."/>
            <person name="Nickerson T."/>
            <person name="O'Dell C.N."/>
            <person name="Oliver K."/>
            <person name="Palmeiri A."/>
            <person name="Palmer S.A."/>
            <person name="Parker A."/>
            <person name="Patel D."/>
            <person name="Pearce A.V."/>
            <person name="Peck A.I."/>
            <person name="Pelan S."/>
            <person name="Phelps K."/>
            <person name="Phillimore B.J."/>
            <person name="Plumb R."/>
            <person name="Rajan J."/>
            <person name="Raymond C."/>
            <person name="Rouse G."/>
            <person name="Saenphimmachak C."/>
            <person name="Sehra H.K."/>
            <person name="Sheridan E."/>
            <person name="Shownkeen R."/>
            <person name="Sims S."/>
            <person name="Skuce C.D."/>
            <person name="Smith M."/>
            <person name="Steward C."/>
            <person name="Subramanian S."/>
            <person name="Sycamore N."/>
            <person name="Tracey A."/>
            <person name="Tromans A."/>
            <person name="Van Helmond Z."/>
            <person name="Wall M."/>
            <person name="Wallis J.M."/>
            <person name="White S."/>
            <person name="Whitehead S.L."/>
            <person name="Wilkinson J.E."/>
            <person name="Willey D.L."/>
            <person name="Williams H."/>
            <person name="Wilming L."/>
            <person name="Wray P.W."/>
            <person name="Wu Z."/>
            <person name="Coulson A."/>
            <person name="Vaudin M."/>
            <person name="Sulston J.E."/>
            <person name="Durbin R.M."/>
            <person name="Hubbard T."/>
            <person name="Wooster R."/>
            <person name="Dunham I."/>
            <person name="Carter N.P."/>
            <person name="McVean G."/>
            <person name="Ross M.T."/>
            <person name="Harrow J."/>
            <person name="Olson M.V."/>
            <person name="Beck S."/>
            <person name="Rogers J."/>
            <person name="Bentley D.R."/>
        </authorList>
    </citation>
    <scope>NUCLEOTIDE SEQUENCE [LARGE SCALE GENOMIC DNA]</scope>
</reference>
<reference evidence="24 29" key="8">
    <citation type="submission" date="2005-07" db="EMBL/GenBank/DDBJ databases">
        <authorList>
            <person name="Mural R.J."/>
            <person name="Istrail S."/>
            <person name="Sutton G.G."/>
            <person name="Florea L."/>
            <person name="Halpern A.L."/>
            <person name="Mobarry C.M."/>
            <person name="Lippert R."/>
            <person name="Walenz B."/>
            <person name="Shatkay H."/>
            <person name="Dew I."/>
            <person name="Miller J.R."/>
            <person name="Flanigan M.J."/>
            <person name="Edwards N.J."/>
            <person name="Bolanos R."/>
            <person name="Fasulo D."/>
            <person name="Halldorsson B.V."/>
            <person name="Hannenhalli S."/>
            <person name="Turner R."/>
            <person name="Yooseph S."/>
            <person name="Lu F."/>
            <person name="Nusskern D.R."/>
            <person name="Shue B.C."/>
            <person name="Zheng X.H."/>
            <person name="Zhong F."/>
            <person name="Delcher A.L."/>
            <person name="Huson D.H."/>
            <person name="Kravitz S.A."/>
            <person name="Mouchard L."/>
            <person name="Reinert K."/>
            <person name="Remington K.A."/>
            <person name="Clark A.G."/>
            <person name="Waterman M.S."/>
            <person name="Eichler E.E."/>
            <person name="Adams M.D."/>
            <person name="Hunkapiller M.W."/>
            <person name="Myers E.W."/>
            <person name="Venter J.C."/>
        </authorList>
    </citation>
    <scope>NUCLEOTIDE SEQUENCE [LARGE SCALE GENOMIC DNA]</scope>
</reference>
<reference evidence="24 25" key="9">
    <citation type="journal article" date="2004" name="Genome Res.">
        <title>The status, quality, and expansion of the NIH full-length cDNA project: the Mammalian Gene Collection (MGC).</title>
        <authorList>
            <consortium name="The MGC Project Team"/>
        </authorList>
    </citation>
    <scope>NUCLEOTIDE SEQUENCE [LARGE SCALE MRNA] (ISOFORMS 1 AND 4)</scope>
    <source>
        <tissue evidence="25">Brain</tissue>
        <tissue>Prostate</tissue>
    </source>
</reference>
<reference evidence="24 29" key="10">
    <citation type="submission" date="2006-07" db="EMBL/GenBank/DDBJ databases">
        <authorList>
            <person name="Huang G."/>
            <person name="Bai Y."/>
            <person name="Zhang L."/>
            <person name="Zhang L."/>
            <person name="Song M."/>
        </authorList>
    </citation>
    <scope>NUCLEOTIDE SEQUENCE [MRNA] OF 1-167 (ISOFORM 1)</scope>
    <source>
        <tissue>Peripheral blood</tissue>
    </source>
</reference>
<reference evidence="24" key="11">
    <citation type="journal article" date="2003" name="J. Immunol.">
        <title>Genomic organization and expression analysis of B7-H4, an immune inhibitory molecule of the B7 family.</title>
        <authorList>
            <person name="Choi I.-H."/>
            <person name="Zhu G."/>
            <person name="Sica G.L."/>
            <person name="Strome S.E."/>
            <person name="Cheville J.C."/>
            <person name="Lau J.S."/>
            <person name="Zhu Y."/>
            <person name="Flies D.B."/>
            <person name="Tamada K."/>
            <person name="Chen L."/>
        </authorList>
    </citation>
    <scope>ALTERNATIVE SPLICING</scope>
    <scope>TISSUE SPECIFICITY</scope>
</reference>
<reference evidence="24" key="12">
    <citation type="journal article" date="2005" name="Exp. Cell Res.">
        <title>The immunomodulatory protein B7-H4 is overexpressed in breast and ovarian cancers and promotes epithelial cell transformation.</title>
        <authorList>
            <person name="Salceda S."/>
            <person name="Tang T."/>
            <person name="Kmet M."/>
            <person name="Munteanu A."/>
            <person name="Ghosh M."/>
            <person name="Macina R."/>
            <person name="Liu W."/>
            <person name="Pilkington G."/>
            <person name="Papkoff J."/>
        </authorList>
    </citation>
    <scope>FUNCTION</scope>
    <scope>SUBCELLULAR LOCATION</scope>
    <scope>TISSUE SPECIFICITY</scope>
    <scope>GLYCOSYLATION</scope>
</reference>
<reference evidence="24" key="13">
    <citation type="journal article" date="2006" name="J. Exp. Med.">
        <title>B7-H4 expression identifies a novel suppressive macrophage population in human ovarian carcinoma.</title>
        <authorList>
            <person name="Kryczek I."/>
            <person name="Zou L."/>
            <person name="Rodriguez P."/>
            <person name="Zhu G."/>
            <person name="Wei S."/>
            <person name="Mottram P."/>
            <person name="Brumlik M."/>
            <person name="Cheng P."/>
            <person name="Curiel T."/>
            <person name="Myers L."/>
            <person name="Lackner A."/>
            <person name="Alvarez X."/>
            <person name="Ochoa A."/>
            <person name="Chen L."/>
            <person name="Zou W."/>
        </authorList>
    </citation>
    <scope>FUNCTION</scope>
    <scope>TISSUE SPECIFICITY</scope>
    <scope>INDUCTION</scope>
</reference>
<reference evidence="24" key="14">
    <citation type="journal article" date="2006" name="J. Immunol.">
        <title>Induction of B7-H4 on APCs through IL-10: novel suppressive mode for regulatory T cells.</title>
        <authorList>
            <person name="Kryczek I."/>
            <person name="Wei S."/>
            <person name="Zou L."/>
            <person name="Zhu G."/>
            <person name="Mottram P."/>
            <person name="Xu H."/>
            <person name="Chen L."/>
            <person name="Zou W."/>
        </authorList>
    </citation>
    <scope>INDUCTION</scope>
</reference>
<reference evidence="24" key="15">
    <citation type="journal article" date="2006" name="Proc. Natl. Acad. Sci. U.S.A.">
        <title>B7-H4 expression in renal cell carcinoma and tumor vasculature: associations with cancer progression and survival.</title>
        <authorList>
            <person name="Krambeck A.E."/>
            <person name="Thompson R.H."/>
            <person name="Dong H."/>
            <person name="Lohse C.M."/>
            <person name="Park E.S."/>
            <person name="Kuntz S.M."/>
            <person name="Leibovich B.C."/>
            <person name="Blute M.L."/>
            <person name="Cheville J.C."/>
            <person name="Kwon E.D."/>
        </authorList>
    </citation>
    <scope>TISSUE SPECIFICITY</scope>
    <scope>USE AS A MARKER FOR RENAL CELL CANCER</scope>
</reference>
<reference evidence="24" key="16">
    <citation type="journal article" date="2007" name="Cancer Res.">
        <title>Relationship between B7-H4, regulatory T cells, and patient outcome in human ovarian carcinoma.</title>
        <authorList>
            <person name="Kryczek I."/>
            <person name="Wei S."/>
            <person name="Zhu G."/>
            <person name="Myers L."/>
            <person name="Mottram P."/>
            <person name="Cheng P."/>
            <person name="Chen L."/>
            <person name="Coukos G."/>
            <person name="Zou W."/>
        </authorList>
    </citation>
    <scope>FUNCTION</scope>
    <scope>INDUCTION</scope>
</reference>
<reference evidence="24" key="17">
    <citation type="journal article" date="2007" name="Gynecol. Oncol.">
        <title>B7-H4 (DD-O110) is overexpressed in high risk uterine endometrioid adenocarcinomas and inversely correlated with tumor T-cell infiltration.</title>
        <authorList>
            <person name="Miyatake T."/>
            <person name="Tringler B."/>
            <person name="Liu W."/>
            <person name="Liu S.-H."/>
            <person name="Papkoff J."/>
            <person name="Enomoto T."/>
            <person name="Torkko K.C."/>
            <person name="Dehn D.L."/>
            <person name="Swisher A."/>
            <person name="Shroyer K.R."/>
        </authorList>
    </citation>
    <scope>FUNCTION</scope>
</reference>
<feature type="signal peptide" evidence="3">
    <location>
        <begin position="1"/>
        <end position="24"/>
    </location>
</feature>
<feature type="chain" id="PRO_0000339237" description="V-set domain-containing T-cell activation inhibitor 1" evidence="3">
    <location>
        <begin position="25"/>
        <end position="282"/>
    </location>
</feature>
<feature type="topological domain" description="Extracellular" evidence="3">
    <location>
        <begin position="25"/>
        <end position="259"/>
    </location>
</feature>
<feature type="transmembrane region" description="Helical" evidence="3">
    <location>
        <begin position="260"/>
        <end position="280"/>
    </location>
</feature>
<feature type="topological domain" description="Cytoplasmic" evidence="3">
    <location>
        <begin position="281"/>
        <end position="282"/>
    </location>
</feature>
<feature type="domain" description="Ig-like V-type 1" evidence="3">
    <location>
        <begin position="35"/>
        <end position="146"/>
    </location>
</feature>
<feature type="domain" description="Ig-like V-type 2" evidence="3">
    <location>
        <begin position="153"/>
        <end position="241"/>
    </location>
</feature>
<feature type="glycosylation site" description="N-linked (GlcNAc...) asparagine" evidence="3">
    <location>
        <position position="216"/>
    </location>
</feature>
<feature type="disulfide bond" evidence="4">
    <location>
        <begin position="56"/>
        <end position="130"/>
    </location>
</feature>
<feature type="disulfide bond" evidence="4">
    <location>
        <begin position="168"/>
        <end position="225"/>
    </location>
</feature>
<feature type="splice variant" id="VSP_045423" description="In isoform 4." evidence="20 21">
    <location>
        <begin position="1"/>
        <end position="95"/>
    </location>
</feature>
<feature type="splice variant" id="VSP_052841" description="In isoform 2." evidence="22">
    <location>
        <begin position="33"/>
        <end position="148"/>
    </location>
</feature>
<feature type="splice variant" id="VSP_052842" description="In isoform 3." evidence="23">
    <original>GRHSITVTTVASAGNIGEDGILSCTFEPDIKLSDIVIQWLKEGVLGLVHEFKEGK</original>
    <variation>EVSVWLSAMKGWCRSSKASLSIDLCFLNFRETLHHSHYCRLSWEHWGGWNPELHF</variation>
    <location>
        <begin position="33"/>
        <end position="87"/>
    </location>
</feature>
<feature type="splice variant" id="VSP_052843" description="In isoform 3." evidence="23">
    <location>
        <begin position="88"/>
        <end position="282"/>
    </location>
</feature>
<feature type="sequence conflict" description="In Ref. 10; ABI16083." evidence="24" ref="10">
    <original>F</original>
    <variation>L</variation>
    <location>
        <position position="29"/>
    </location>
</feature>
<feature type="sequence conflict" description="In Ref. 6; BAB15349." evidence="24" ref="6">
    <original>L</original>
    <variation>Q</variation>
    <location>
        <position position="54"/>
    </location>
</feature>
<feature type="strand" evidence="34">
    <location>
        <begin position="39"/>
        <end position="42"/>
    </location>
</feature>
<feature type="strand" evidence="34">
    <location>
        <begin position="44"/>
        <end position="47"/>
    </location>
</feature>
<feature type="strand" evidence="34">
    <location>
        <begin position="52"/>
        <end position="58"/>
    </location>
</feature>
<feature type="helix" evidence="34">
    <location>
        <begin position="64"/>
        <end position="66"/>
    </location>
</feature>
<feature type="strand" evidence="34">
    <location>
        <begin position="68"/>
        <end position="73"/>
    </location>
</feature>
<feature type="strand" evidence="34">
    <location>
        <begin position="77"/>
        <end position="84"/>
    </location>
</feature>
<feature type="helix" evidence="34">
    <location>
        <begin position="95"/>
        <end position="97"/>
    </location>
</feature>
<feature type="strand" evidence="34">
    <location>
        <begin position="101"/>
        <end position="103"/>
    </location>
</feature>
<feature type="turn" evidence="34">
    <location>
        <begin position="105"/>
        <end position="107"/>
    </location>
</feature>
<feature type="helix" evidence="34">
    <location>
        <begin position="108"/>
        <end position="110"/>
    </location>
</feature>
<feature type="strand" evidence="34">
    <location>
        <begin position="115"/>
        <end position="119"/>
    </location>
</feature>
<feature type="helix" evidence="34">
    <location>
        <begin position="122"/>
        <end position="124"/>
    </location>
</feature>
<feature type="strand" evidence="34">
    <location>
        <begin position="126"/>
        <end position="134"/>
    </location>
</feature>
<feature type="strand" evidence="34">
    <location>
        <begin position="137"/>
        <end position="148"/>
    </location>
</feature>
<name>VTCN1_HUMAN</name>
<protein>
    <recommendedName>
        <fullName>V-set domain-containing T-cell activation inhibitor 1</fullName>
    </recommendedName>
    <alternativeName>
        <fullName>B7 homolog 4</fullName>
        <shortName>B7-H4</shortName>
    </alternativeName>
    <alternativeName>
        <fullName>B7h.5</fullName>
    </alternativeName>
    <alternativeName>
        <fullName>Immune costimulatory protein B7-H4</fullName>
    </alternativeName>
    <alternativeName>
        <fullName>Protein B7S1</fullName>
    </alternativeName>
    <alternativeName>
        <fullName>T-cell costimulatory molecule B7x</fullName>
    </alternativeName>
</protein>
<gene>
    <name evidence="33" type="primary">VTCN1</name>
    <name evidence="29" type="synonym">B7H4</name>
    <name type="ORF">UNQ659/PRO1291</name>
</gene>
<organism>
    <name type="scientific">Homo sapiens</name>
    <name type="common">Human</name>
    <dbReference type="NCBI Taxonomy" id="9606"/>
    <lineage>
        <taxon>Eukaryota</taxon>
        <taxon>Metazoa</taxon>
        <taxon>Chordata</taxon>
        <taxon>Craniata</taxon>
        <taxon>Vertebrata</taxon>
        <taxon>Euteleostomi</taxon>
        <taxon>Mammalia</taxon>
        <taxon>Eutheria</taxon>
        <taxon>Euarchontoglires</taxon>
        <taxon>Primates</taxon>
        <taxon>Haplorrhini</taxon>
        <taxon>Catarrhini</taxon>
        <taxon>Hominidae</taxon>
        <taxon>Homo</taxon>
    </lineage>
</organism>
<sequence length="282" mass="30878">MASLGQILFWSIISIIIILAGAIALIIGFGISGRHSITVTTVASAGNIGEDGILSCTFEPDIKLSDIVIQWLKEGVLGLVHEFKEGKDELSEQDEMFRGRTAVFADQVIVGNASLRLKNVQLTDAGTYKCYIITSKGKGNANLEYKTGAFSMPEVNVDYNASSETLRCEAPRWFPQPTVVWASQVDQGANFSEVSNTSFELNSENVTMKVVSVLYNVTINNTYSCMIENDIAKATGDIKVTESEIKRRSHLQLLNSKASLCVSSFFAISWALLPLSPYLMLK</sequence>
<comment type="function">
    <text evidence="2 11 12 17 18">Negatively regulates T-cell-mediated immune response by inhibiting T-cell activation, proliferation, cytokine production and development of cytotoxicity. When expressed on the cell surface of tumor macrophages, plays an important role, together with regulatory T-cells (Treg), in the suppression of tumor-associated antigen-specific T-cell immunity. Involved in promoting epithelial cell transformation.</text>
</comment>
<comment type="interaction">
    <interactant intactId="EBI-20863858">
        <id>Q7Z7D3</id>
    </interactant>
    <interactant intactId="EBI-749635">
        <id>P61601</id>
        <label>NCALD</label>
    </interactant>
    <organismsDiffer>false</organismsDiffer>
    <experiments>2</experiments>
</comment>
<comment type="subcellular location">
    <subcellularLocation>
        <location evidence="3">Cell membrane</location>
        <topology evidence="24">Single-pass type I membrane protein</topology>
    </subcellularLocation>
    <text evidence="3 5 11 14">Expressed at the cell surface. A soluble form has also been detected.</text>
</comment>
<comment type="alternative products">
    <event type="alternative splicing"/>
    <isoform>
        <id>Q7Z7D3-1</id>
        <name evidence="5 6 7 9 10 13 14">1</name>
        <sequence type="displayed"/>
    </isoform>
    <isoform>
        <id>Q7Z7D3-2</id>
        <name evidence="14">2</name>
        <sequence type="described" ref="VSP_052841"/>
    </isoform>
    <isoform>
        <id>Q7Z7D3-3</id>
        <name evidence="19">3</name>
        <sequence type="described" ref="VSP_052842 VSP_052843"/>
    </isoform>
    <isoform>
        <id>Q7Z7D3-4</id>
        <name>4</name>
        <sequence type="described" ref="VSP_045423"/>
    </isoform>
</comment>
<comment type="tissue specificity">
    <text evidence="5 8 11 12 14 16 17">Overexpressed in breast, ovarian, endometrial, renal cell (RCC) and non-small-cell lung cancers (NSCLC). Expressed on activated T- and B-cells, monocytes and dendritic cells, but not expressed in most normal tissues (at protein level). Widely expressed, including in kidney, liver, lung, ovary, placenta, spleen and testis.</text>
</comment>
<comment type="induction">
    <text evidence="12 15 18">Up-regulated by IL6/interleukin-6 and IL10/interleukin-10 and inhibited by CSF2/GM-CSF and IL4/interleukin-4 on antigen-presenting cells (APCs).</text>
</comment>
<comment type="PTM">
    <text evidence="11">N-glycosylated.</text>
</comment>
<comment type="miscellaneous">
    <text evidence="16">May serve as a predictive marker for renal cell carcinoma.</text>
</comment>
<comment type="similarity">
    <text evidence="1">Belongs to the immunoglobulin superfamily. BTN/MOG family.</text>
</comment>
<comment type="caution">
    <text evidence="24">The mouse ortholog has been shown to be a GPI-anchored protein but the Gly residue which is predicted to be the modified site in mouse and rat is not conserved in human.</text>
</comment>
<comment type="online information" name="Atlas of Genetics and Cytogenetics in Oncology and Haematology">
    <link uri="https://atlasgeneticsoncology.org/gene/44144/VTCN1"/>
</comment>
<keyword id="KW-0002">3D-structure</keyword>
<keyword id="KW-1064">Adaptive immunity</keyword>
<keyword id="KW-0025">Alternative splicing</keyword>
<keyword id="KW-1003">Cell membrane</keyword>
<keyword id="KW-1015">Disulfide bond</keyword>
<keyword id="KW-0325">Glycoprotein</keyword>
<keyword id="KW-0391">Immunity</keyword>
<keyword id="KW-0393">Immunoglobulin domain</keyword>
<keyword id="KW-0449">Lipoprotein</keyword>
<keyword id="KW-0472">Membrane</keyword>
<keyword id="KW-1267">Proteomics identification</keyword>
<keyword id="KW-1185">Reference proteome</keyword>
<keyword id="KW-0677">Repeat</keyword>
<keyword id="KW-0732">Signal</keyword>
<keyword id="KW-0812">Transmembrane</keyword>
<keyword id="KW-1133">Transmembrane helix</keyword>
<accession>Q7Z7D3</accession>
<accession>Q0GN76</accession>
<accession>Q45VN0</accession>
<accession>Q5WPZ3</accession>
<accession>Q6P097</accession>
<accession>Q9H6B2</accession>